<name>NRFA_ALIFM</name>
<gene>
    <name evidence="1" type="primary">nrfA</name>
    <name type="ordered locus">VFMJ11_1649</name>
</gene>
<organism>
    <name type="scientific">Aliivibrio fischeri (strain MJ11)</name>
    <name type="common">Vibrio fischeri</name>
    <dbReference type="NCBI Taxonomy" id="388396"/>
    <lineage>
        <taxon>Bacteria</taxon>
        <taxon>Pseudomonadati</taxon>
        <taxon>Pseudomonadota</taxon>
        <taxon>Gammaproteobacteria</taxon>
        <taxon>Vibrionales</taxon>
        <taxon>Vibrionaceae</taxon>
        <taxon>Aliivibrio</taxon>
    </lineage>
</organism>
<proteinExistence type="inferred from homology"/>
<dbReference type="EC" id="1.7.2.2" evidence="1"/>
<dbReference type="EMBL" id="CP001139">
    <property type="protein sequence ID" value="ACH65451.1"/>
    <property type="molecule type" value="Genomic_DNA"/>
</dbReference>
<dbReference type="RefSeq" id="WP_011262128.1">
    <property type="nucleotide sequence ID" value="NC_011184.1"/>
</dbReference>
<dbReference type="SMR" id="B5FEY0"/>
<dbReference type="GeneID" id="54164228"/>
<dbReference type="KEGG" id="vfm:VFMJ11_1649"/>
<dbReference type="HOGENOM" id="CLU_035040_1_0_6"/>
<dbReference type="UniPathway" id="UPA00653"/>
<dbReference type="Proteomes" id="UP000001857">
    <property type="component" value="Chromosome I"/>
</dbReference>
<dbReference type="GO" id="GO:0030288">
    <property type="term" value="C:outer membrane-bounded periplasmic space"/>
    <property type="evidence" value="ECO:0007669"/>
    <property type="project" value="TreeGrafter"/>
</dbReference>
<dbReference type="GO" id="GO:0005509">
    <property type="term" value="F:calcium ion binding"/>
    <property type="evidence" value="ECO:0007669"/>
    <property type="project" value="UniProtKB-UniRule"/>
</dbReference>
<dbReference type="GO" id="GO:0020037">
    <property type="term" value="F:heme binding"/>
    <property type="evidence" value="ECO:0007669"/>
    <property type="project" value="InterPro"/>
</dbReference>
<dbReference type="GO" id="GO:0005506">
    <property type="term" value="F:iron ion binding"/>
    <property type="evidence" value="ECO:0007669"/>
    <property type="project" value="UniProtKB-UniRule"/>
</dbReference>
<dbReference type="GO" id="GO:0042279">
    <property type="term" value="F:nitrite reductase (cytochrome, ammonia-forming) activity"/>
    <property type="evidence" value="ECO:0007669"/>
    <property type="project" value="UniProtKB-UniRule"/>
</dbReference>
<dbReference type="GO" id="GO:0019645">
    <property type="term" value="P:anaerobic electron transport chain"/>
    <property type="evidence" value="ECO:0007669"/>
    <property type="project" value="TreeGrafter"/>
</dbReference>
<dbReference type="GO" id="GO:0042128">
    <property type="term" value="P:nitrate assimilation"/>
    <property type="evidence" value="ECO:0007669"/>
    <property type="project" value="UniProtKB-UniRule"/>
</dbReference>
<dbReference type="CDD" id="cd00548">
    <property type="entry name" value="NrfA-like"/>
    <property type="match status" value="1"/>
</dbReference>
<dbReference type="FunFam" id="1.10.1130.10:FF:000002">
    <property type="entry name" value="Cytochrome c-552"/>
    <property type="match status" value="1"/>
</dbReference>
<dbReference type="FunFam" id="1.20.140.10:FF:000014">
    <property type="entry name" value="Cytochrome c-552"/>
    <property type="match status" value="1"/>
</dbReference>
<dbReference type="Gene3D" id="1.20.140.10">
    <property type="entry name" value="Butyryl-CoA Dehydrogenase, subunit A, domain 3"/>
    <property type="match status" value="1"/>
</dbReference>
<dbReference type="Gene3D" id="1.10.1130.10">
    <property type="entry name" value="Flavocytochrome C3, Chain A"/>
    <property type="match status" value="1"/>
</dbReference>
<dbReference type="HAMAP" id="MF_01182">
    <property type="entry name" value="Cytochrom_C552"/>
    <property type="match status" value="1"/>
</dbReference>
<dbReference type="InterPro" id="IPR003321">
    <property type="entry name" value="Cyt_c552"/>
</dbReference>
<dbReference type="InterPro" id="IPR017570">
    <property type="entry name" value="Cyt_c_NO2Rdtase_formate-dep"/>
</dbReference>
<dbReference type="InterPro" id="IPR036280">
    <property type="entry name" value="Multihaem_cyt_sf"/>
</dbReference>
<dbReference type="NCBIfam" id="TIGR03152">
    <property type="entry name" value="cyto_c552_HCOOH"/>
    <property type="match status" value="1"/>
</dbReference>
<dbReference type="NCBIfam" id="NF008339">
    <property type="entry name" value="PRK11125.1"/>
    <property type="match status" value="1"/>
</dbReference>
<dbReference type="PANTHER" id="PTHR30633:SF0">
    <property type="entry name" value="CYTOCHROME C-552"/>
    <property type="match status" value="1"/>
</dbReference>
<dbReference type="PANTHER" id="PTHR30633">
    <property type="entry name" value="CYTOCHROME C-552 RESPIRATORY NITRITE REDUCTASE"/>
    <property type="match status" value="1"/>
</dbReference>
<dbReference type="Pfam" id="PF02335">
    <property type="entry name" value="Cytochrom_C552"/>
    <property type="match status" value="1"/>
</dbReference>
<dbReference type="PIRSF" id="PIRSF000243">
    <property type="entry name" value="Cyt_c552"/>
    <property type="match status" value="1"/>
</dbReference>
<dbReference type="SUPFAM" id="SSF48695">
    <property type="entry name" value="Multiheme cytochromes"/>
    <property type="match status" value="1"/>
</dbReference>
<dbReference type="PROSITE" id="PS51008">
    <property type="entry name" value="MULTIHEME_CYTC"/>
    <property type="match status" value="1"/>
</dbReference>
<sequence length="478" mass="53447">MKKQWTRRSAAAIAMVTTLLLSSHSFAASENNERVDPRNEAYAKDHADQYDSWRSTSDSVQIEDALAEDPNMVILWAGYGFAKDYNKARGHFYAVDDVRQTLRTGGPTDENSGPMPMACWSCKSPDVGRVIEEQGEDGYFSGKWARLGSEIQNPIGCADCHDTRSEEFKNGGPALALTKPHVERAMDAIGKPFGDQSRLDQQAAVCGQCHVEYYFTGKTKAVKFPWDKGTTVDEMEEYYDEIGFKDWTHKVSKAPMLKAQHPGYETWRDGIHGKNKVTCVDCHMPKVTKEDGTVYTDHKVGNPFDRFEDTCANCHTQSKEMLQSVVATRKAQVLKMKLTAERQIVAAHFEAGAAWDAGATEKEMAPILQDIRHAQWRWDYAIASHGVHMHAPEVALEVLGTAVDKAADARTKLVRLLAKKGITEPVAIPDISTKAAAQKALGMDMEAMKAEKKHFLETVVPEWEEQAKEREARDYEPM</sequence>
<reference key="1">
    <citation type="submission" date="2008-08" db="EMBL/GenBank/DDBJ databases">
        <title>Complete sequence of Vibrio fischeri strain MJ11.</title>
        <authorList>
            <person name="Mandel M.J."/>
            <person name="Stabb E.V."/>
            <person name="Ruby E.G."/>
            <person name="Ferriera S."/>
            <person name="Johnson J."/>
            <person name="Kravitz S."/>
            <person name="Beeson K."/>
            <person name="Sutton G."/>
            <person name="Rogers Y.-H."/>
            <person name="Friedman R."/>
            <person name="Frazier M."/>
            <person name="Venter J.C."/>
        </authorList>
    </citation>
    <scope>NUCLEOTIDE SEQUENCE [LARGE SCALE GENOMIC DNA]</scope>
    <source>
        <strain>MJ11</strain>
    </source>
</reference>
<evidence type="ECO:0000255" key="1">
    <source>
        <dbReference type="HAMAP-Rule" id="MF_01182"/>
    </source>
</evidence>
<protein>
    <recommendedName>
        <fullName evidence="1">Cytochrome c-552</fullName>
        <ecNumber evidence="1">1.7.2.2</ecNumber>
    </recommendedName>
    <alternativeName>
        <fullName evidence="1">Ammonia-forming cytochrome c nitrite reductase</fullName>
        <shortName evidence="1">Cytochrome c nitrite reductase</shortName>
    </alternativeName>
</protein>
<keyword id="KW-0106">Calcium</keyword>
<keyword id="KW-0249">Electron transport</keyword>
<keyword id="KW-0349">Heme</keyword>
<keyword id="KW-0408">Iron</keyword>
<keyword id="KW-0479">Metal-binding</keyword>
<keyword id="KW-0560">Oxidoreductase</keyword>
<keyword id="KW-0574">Periplasm</keyword>
<keyword id="KW-0732">Signal</keyword>
<keyword id="KW-0813">Transport</keyword>
<accession>B5FEY0</accession>
<comment type="function">
    <text evidence="1">Catalyzes the reduction of nitrite to ammonia, consuming six electrons in the process.</text>
</comment>
<comment type="catalytic activity">
    <reaction evidence="1">
        <text>6 Fe(III)-[cytochrome c] + NH4(+) + 2 H2O = 6 Fe(II)-[cytochrome c] + nitrite + 8 H(+)</text>
        <dbReference type="Rhea" id="RHEA:13089"/>
        <dbReference type="Rhea" id="RHEA-COMP:10350"/>
        <dbReference type="Rhea" id="RHEA-COMP:14399"/>
        <dbReference type="ChEBI" id="CHEBI:15377"/>
        <dbReference type="ChEBI" id="CHEBI:15378"/>
        <dbReference type="ChEBI" id="CHEBI:16301"/>
        <dbReference type="ChEBI" id="CHEBI:28938"/>
        <dbReference type="ChEBI" id="CHEBI:29033"/>
        <dbReference type="ChEBI" id="CHEBI:29034"/>
        <dbReference type="EC" id="1.7.2.2"/>
    </reaction>
</comment>
<comment type="cofactor">
    <cofactor evidence="1">
        <name>Ca(2+)</name>
        <dbReference type="ChEBI" id="CHEBI:29108"/>
    </cofactor>
    <text evidence="1">Binds 1 Ca(2+) ion per monomer.</text>
</comment>
<comment type="cofactor">
    <cofactor evidence="1">
        <name>heme c</name>
        <dbReference type="ChEBI" id="CHEBI:61717"/>
    </cofactor>
    <text evidence="1">Binds 5 heme c groups covalently per monomer.</text>
</comment>
<comment type="pathway">
    <text evidence="1">Nitrogen metabolism; nitrate reduction (assimilation).</text>
</comment>
<comment type="subcellular location">
    <subcellularLocation>
        <location evidence="1">Periplasm</location>
    </subcellularLocation>
</comment>
<comment type="similarity">
    <text evidence="1">Belongs to the cytochrome c-552 family.</text>
</comment>
<feature type="signal peptide" evidence="1">
    <location>
        <begin position="1"/>
        <end position="27"/>
    </location>
</feature>
<feature type="chain" id="PRO_1000138225" description="Cytochrome c-552">
    <location>
        <begin position="28"/>
        <end position="478"/>
    </location>
</feature>
<feature type="binding site" description="axial binding residue" evidence="1">
    <location>
        <position position="91"/>
    </location>
    <ligand>
        <name>heme c</name>
        <dbReference type="ChEBI" id="CHEBI:61717"/>
        <label>3</label>
    </ligand>
    <ligandPart>
        <name>Fe</name>
        <dbReference type="ChEBI" id="CHEBI:18248"/>
    </ligandPart>
</feature>
<feature type="binding site" description="covalent" evidence="1">
    <location>
        <position position="119"/>
    </location>
    <ligand>
        <name>heme</name>
        <dbReference type="ChEBI" id="CHEBI:30413"/>
        <label>1</label>
    </ligand>
</feature>
<feature type="binding site" description="covalent" evidence="1">
    <location>
        <position position="122"/>
    </location>
    <ligand>
        <name>heme</name>
        <dbReference type="ChEBI" id="CHEBI:30413"/>
        <label>1</label>
    </ligand>
</feature>
<feature type="binding site" description="axial binding residue" evidence="1">
    <location>
        <position position="123"/>
    </location>
    <ligand>
        <name>heme</name>
        <dbReference type="ChEBI" id="CHEBI:30413"/>
        <label>1</label>
    </ligand>
    <ligandPart>
        <name>Fe</name>
        <dbReference type="ChEBI" id="CHEBI:18248"/>
    </ligandPart>
</feature>
<feature type="binding site" description="covalent" evidence="1">
    <location>
        <position position="157"/>
    </location>
    <ligand>
        <name>heme c</name>
        <dbReference type="ChEBI" id="CHEBI:61717"/>
        <label>2</label>
    </ligand>
</feature>
<feature type="binding site" description="covalent" evidence="1">
    <location>
        <position position="160"/>
    </location>
    <ligand>
        <name>heme c</name>
        <dbReference type="ChEBI" id="CHEBI:61717"/>
        <label>2</label>
    </ligand>
</feature>
<feature type="binding site" description="axial binding residue" evidence="1">
    <location>
        <position position="161"/>
    </location>
    <ligand>
        <name>heme c</name>
        <dbReference type="ChEBI" id="CHEBI:61717"/>
        <label>2</label>
    </ligand>
    <ligandPart>
        <name>Fe</name>
        <dbReference type="ChEBI" id="CHEBI:18248"/>
    </ligandPart>
</feature>
<feature type="binding site" description="covalent" evidence="1">
    <location>
        <position position="206"/>
    </location>
    <ligand>
        <name>heme c</name>
        <dbReference type="ChEBI" id="CHEBI:61717"/>
        <label>3</label>
    </ligand>
</feature>
<feature type="binding site" description="covalent" evidence="1">
    <location>
        <position position="209"/>
    </location>
    <ligand>
        <name>heme c</name>
        <dbReference type="ChEBI" id="CHEBI:61717"/>
        <label>3</label>
    </ligand>
</feature>
<feature type="binding site" description="axial binding residue" evidence="1">
    <location>
        <position position="210"/>
    </location>
    <ligand>
        <name>heme c</name>
        <dbReference type="ChEBI" id="CHEBI:61717"/>
        <label>3</label>
    </ligand>
    <ligandPart>
        <name>Fe</name>
        <dbReference type="ChEBI" id="CHEBI:18248"/>
    </ligandPart>
</feature>
<feature type="binding site" evidence="1">
    <location>
        <position position="212"/>
    </location>
    <ligand>
        <name>Ca(2+)</name>
        <dbReference type="ChEBI" id="CHEBI:29108"/>
    </ligand>
</feature>
<feature type="binding site" evidence="1">
    <location>
        <position position="213"/>
    </location>
    <ligand>
        <name>Ca(2+)</name>
        <dbReference type="ChEBI" id="CHEBI:29108"/>
    </ligand>
</feature>
<feature type="binding site" evidence="1">
    <location>
        <position position="213"/>
    </location>
    <ligand>
        <name>substrate</name>
    </ligand>
</feature>
<feature type="binding site" evidence="1">
    <location>
        <position position="258"/>
    </location>
    <ligand>
        <name>Ca(2+)</name>
        <dbReference type="ChEBI" id="CHEBI:29108"/>
    </ligand>
</feature>
<feature type="binding site" evidence="1">
    <location>
        <position position="260"/>
    </location>
    <ligand>
        <name>Ca(2+)</name>
        <dbReference type="ChEBI" id="CHEBI:29108"/>
    </ligand>
</feature>
<feature type="binding site" evidence="1">
    <location>
        <position position="261"/>
    </location>
    <ligand>
        <name>substrate</name>
    </ligand>
</feature>
<feature type="binding site" description="axial binding residue" evidence="1">
    <location>
        <position position="272"/>
    </location>
    <ligand>
        <name>heme c</name>
        <dbReference type="ChEBI" id="CHEBI:61717"/>
        <label>5</label>
    </ligand>
    <ligandPart>
        <name>Fe</name>
        <dbReference type="ChEBI" id="CHEBI:18248"/>
    </ligandPart>
</feature>
<feature type="binding site" description="covalent" evidence="1">
    <location>
        <position position="279"/>
    </location>
    <ligand>
        <name>heme c</name>
        <dbReference type="ChEBI" id="CHEBI:61717"/>
        <label>4</label>
    </ligand>
</feature>
<feature type="binding site" description="covalent" evidence="1">
    <location>
        <position position="282"/>
    </location>
    <ligand>
        <name>heme c</name>
        <dbReference type="ChEBI" id="CHEBI:61717"/>
        <label>4</label>
    </ligand>
</feature>
<feature type="binding site" description="axial binding residue" evidence="1">
    <location>
        <position position="283"/>
    </location>
    <ligand>
        <name>heme c</name>
        <dbReference type="ChEBI" id="CHEBI:61717"/>
        <label>4</label>
    </ligand>
    <ligandPart>
        <name>Fe</name>
        <dbReference type="ChEBI" id="CHEBI:18248"/>
    </ligandPart>
</feature>
<feature type="binding site" description="axial binding residue" evidence="1">
    <location>
        <position position="298"/>
    </location>
    <ligand>
        <name>heme c</name>
        <dbReference type="ChEBI" id="CHEBI:61717"/>
        <label>2</label>
    </ligand>
    <ligandPart>
        <name>Fe</name>
        <dbReference type="ChEBI" id="CHEBI:18248"/>
    </ligandPart>
</feature>
<feature type="binding site" description="covalent" evidence="1">
    <location>
        <position position="311"/>
    </location>
    <ligand>
        <name>heme c</name>
        <dbReference type="ChEBI" id="CHEBI:61717"/>
        <label>5</label>
    </ligand>
</feature>
<feature type="binding site" description="covalent" evidence="1">
    <location>
        <position position="314"/>
    </location>
    <ligand>
        <name>heme c</name>
        <dbReference type="ChEBI" id="CHEBI:61717"/>
        <label>5</label>
    </ligand>
</feature>
<feature type="binding site" description="axial binding residue" evidence="1">
    <location>
        <position position="315"/>
    </location>
    <ligand>
        <name>heme c</name>
        <dbReference type="ChEBI" id="CHEBI:61717"/>
        <label>5</label>
    </ligand>
    <ligandPart>
        <name>Fe</name>
        <dbReference type="ChEBI" id="CHEBI:18248"/>
    </ligandPart>
</feature>
<feature type="binding site" description="axial binding residue" evidence="1">
    <location>
        <position position="390"/>
    </location>
    <ligand>
        <name>heme c</name>
        <dbReference type="ChEBI" id="CHEBI:61717"/>
        <label>4</label>
    </ligand>
    <ligandPart>
        <name>Fe</name>
        <dbReference type="ChEBI" id="CHEBI:18248"/>
    </ligandPart>
</feature>